<name>Y968_TOLAT</name>
<keyword id="KW-1185">Reference proteome</keyword>
<gene>
    <name type="ordered locus">Tola_0968</name>
</gene>
<evidence type="ECO:0000255" key="1">
    <source>
        <dbReference type="HAMAP-Rule" id="MF_00652"/>
    </source>
</evidence>
<organism>
    <name type="scientific">Tolumonas auensis (strain DSM 9187 / NBRC 110442 / TA 4)</name>
    <dbReference type="NCBI Taxonomy" id="595494"/>
    <lineage>
        <taxon>Bacteria</taxon>
        <taxon>Pseudomonadati</taxon>
        <taxon>Pseudomonadota</taxon>
        <taxon>Gammaproteobacteria</taxon>
        <taxon>Aeromonadales</taxon>
        <taxon>Aeromonadaceae</taxon>
        <taxon>Tolumonas</taxon>
    </lineage>
</organism>
<comment type="similarity">
    <text evidence="1">Belongs to the UPF0246 family.</text>
</comment>
<proteinExistence type="inferred from homology"/>
<feature type="chain" id="PRO_1000212433" description="UPF0246 protein Tola_0968">
    <location>
        <begin position="1"/>
        <end position="260"/>
    </location>
</feature>
<protein>
    <recommendedName>
        <fullName evidence="1">UPF0246 protein Tola_0968</fullName>
    </recommendedName>
</protein>
<accession>C4LCN2</accession>
<reference key="1">
    <citation type="submission" date="2009-05" db="EMBL/GenBank/DDBJ databases">
        <title>Complete sequence of Tolumonas auensis DSM 9187.</title>
        <authorList>
            <consortium name="US DOE Joint Genome Institute"/>
            <person name="Lucas S."/>
            <person name="Copeland A."/>
            <person name="Lapidus A."/>
            <person name="Glavina del Rio T."/>
            <person name="Tice H."/>
            <person name="Bruce D."/>
            <person name="Goodwin L."/>
            <person name="Pitluck S."/>
            <person name="Chertkov O."/>
            <person name="Brettin T."/>
            <person name="Detter J.C."/>
            <person name="Han C."/>
            <person name="Larimer F."/>
            <person name="Land M."/>
            <person name="Hauser L."/>
            <person name="Kyrpides N."/>
            <person name="Mikhailova N."/>
            <person name="Spring S."/>
            <person name="Beller H."/>
        </authorList>
    </citation>
    <scope>NUCLEOTIDE SEQUENCE [LARGE SCALE GENOMIC DNA]</scope>
    <source>
        <strain>DSM 9187 / NBRC 110442 / TA 4</strain>
    </source>
</reference>
<dbReference type="EMBL" id="CP001616">
    <property type="protein sequence ID" value="ACQ92596.1"/>
    <property type="molecule type" value="Genomic_DNA"/>
</dbReference>
<dbReference type="RefSeq" id="WP_012729195.1">
    <property type="nucleotide sequence ID" value="NC_012691.1"/>
</dbReference>
<dbReference type="SMR" id="C4LCN2"/>
<dbReference type="STRING" id="595494.Tola_0968"/>
<dbReference type="KEGG" id="tau:Tola_0968"/>
<dbReference type="eggNOG" id="COG3022">
    <property type="taxonomic scope" value="Bacteria"/>
</dbReference>
<dbReference type="HOGENOM" id="CLU_061989_0_0_6"/>
<dbReference type="OrthoDB" id="9777133at2"/>
<dbReference type="Proteomes" id="UP000009073">
    <property type="component" value="Chromosome"/>
</dbReference>
<dbReference type="GO" id="GO:0005829">
    <property type="term" value="C:cytosol"/>
    <property type="evidence" value="ECO:0007669"/>
    <property type="project" value="TreeGrafter"/>
</dbReference>
<dbReference type="GO" id="GO:0033194">
    <property type="term" value="P:response to hydroperoxide"/>
    <property type="evidence" value="ECO:0007669"/>
    <property type="project" value="TreeGrafter"/>
</dbReference>
<dbReference type="HAMAP" id="MF_00652">
    <property type="entry name" value="UPF0246"/>
    <property type="match status" value="1"/>
</dbReference>
<dbReference type="InterPro" id="IPR005583">
    <property type="entry name" value="YaaA"/>
</dbReference>
<dbReference type="NCBIfam" id="NF002541">
    <property type="entry name" value="PRK02101.1-1"/>
    <property type="match status" value="1"/>
</dbReference>
<dbReference type="NCBIfam" id="NF002542">
    <property type="entry name" value="PRK02101.1-3"/>
    <property type="match status" value="1"/>
</dbReference>
<dbReference type="PANTHER" id="PTHR30283:SF4">
    <property type="entry name" value="PEROXIDE STRESS RESISTANCE PROTEIN YAAA"/>
    <property type="match status" value="1"/>
</dbReference>
<dbReference type="PANTHER" id="PTHR30283">
    <property type="entry name" value="PEROXIDE STRESS RESPONSE PROTEIN YAAA"/>
    <property type="match status" value="1"/>
</dbReference>
<dbReference type="Pfam" id="PF03883">
    <property type="entry name" value="H2O2_YaaD"/>
    <property type="match status" value="1"/>
</dbReference>
<sequence>MLAVLSPAKSLDYESPLTTSRFSEPALMHESALLIEQLRQFAPADIASLMHLSDKLAGLNVARYAQWEPVATPQNARPAVLAFNGDVYSGLAAQDFDDADLDVAQQHIRILSGLYGLLRPLDLLQPYRLEMGTKLGNPRGKDLYAFWGDIITGHLNQALTEQGDNVLLNLASDEYFKSVNVKRLAGRVITPVFQDEKNGKYKIISFYAKKARGLMARYLVKERISKPEQLLDFTVAGYGYCPELSTENKLVFRRPEDLSQ</sequence>